<feature type="chain" id="PRO_0000272108" description="Lipoprotein-releasing system ATP-binding protein LolD">
    <location>
        <begin position="1"/>
        <end position="224"/>
    </location>
</feature>
<feature type="domain" description="ABC transporter" evidence="1">
    <location>
        <begin position="4"/>
        <end position="224"/>
    </location>
</feature>
<feature type="binding site" evidence="1">
    <location>
        <begin position="40"/>
        <end position="47"/>
    </location>
    <ligand>
        <name>ATP</name>
        <dbReference type="ChEBI" id="CHEBI:30616"/>
    </ligand>
</feature>
<protein>
    <recommendedName>
        <fullName evidence="1">Lipoprotein-releasing system ATP-binding protein LolD</fullName>
        <ecNumber evidence="1">7.6.2.-</ecNumber>
    </recommendedName>
</protein>
<keyword id="KW-0067">ATP-binding</keyword>
<keyword id="KW-0997">Cell inner membrane</keyword>
<keyword id="KW-1003">Cell membrane</keyword>
<keyword id="KW-0472">Membrane</keyword>
<keyword id="KW-0547">Nucleotide-binding</keyword>
<keyword id="KW-1185">Reference proteome</keyword>
<keyword id="KW-1278">Translocase</keyword>
<keyword id="KW-0813">Transport</keyword>
<organism>
    <name type="scientific">Myxococcus xanthus (strain DK1622)</name>
    <dbReference type="NCBI Taxonomy" id="246197"/>
    <lineage>
        <taxon>Bacteria</taxon>
        <taxon>Pseudomonadati</taxon>
        <taxon>Myxococcota</taxon>
        <taxon>Myxococcia</taxon>
        <taxon>Myxococcales</taxon>
        <taxon>Cystobacterineae</taxon>
        <taxon>Myxococcaceae</taxon>
        <taxon>Myxococcus</taxon>
    </lineage>
</organism>
<gene>
    <name evidence="1" type="primary">lolD</name>
    <name type="ordered locus">MXAN_4729</name>
</gene>
<dbReference type="EC" id="7.6.2.-" evidence="1"/>
<dbReference type="EMBL" id="CP000113">
    <property type="protein sequence ID" value="ABF87587.1"/>
    <property type="molecule type" value="Genomic_DNA"/>
</dbReference>
<dbReference type="RefSeq" id="WP_011554716.1">
    <property type="nucleotide sequence ID" value="NC_008095.1"/>
</dbReference>
<dbReference type="SMR" id="Q1D382"/>
<dbReference type="STRING" id="246197.MXAN_4729"/>
<dbReference type="EnsemblBacteria" id="ABF87587">
    <property type="protein sequence ID" value="ABF87587"/>
    <property type="gene ID" value="MXAN_4729"/>
</dbReference>
<dbReference type="GeneID" id="41362028"/>
<dbReference type="KEGG" id="mxa:MXAN_4729"/>
<dbReference type="eggNOG" id="COG1136">
    <property type="taxonomic scope" value="Bacteria"/>
</dbReference>
<dbReference type="HOGENOM" id="CLU_000604_1_22_7"/>
<dbReference type="OrthoDB" id="9809450at2"/>
<dbReference type="Proteomes" id="UP000002402">
    <property type="component" value="Chromosome"/>
</dbReference>
<dbReference type="GO" id="GO:0005886">
    <property type="term" value="C:plasma membrane"/>
    <property type="evidence" value="ECO:0007669"/>
    <property type="project" value="UniProtKB-SubCell"/>
</dbReference>
<dbReference type="GO" id="GO:0005524">
    <property type="term" value="F:ATP binding"/>
    <property type="evidence" value="ECO:0007669"/>
    <property type="project" value="UniProtKB-KW"/>
</dbReference>
<dbReference type="GO" id="GO:0016887">
    <property type="term" value="F:ATP hydrolysis activity"/>
    <property type="evidence" value="ECO:0007669"/>
    <property type="project" value="InterPro"/>
</dbReference>
<dbReference type="GO" id="GO:0022857">
    <property type="term" value="F:transmembrane transporter activity"/>
    <property type="evidence" value="ECO:0007669"/>
    <property type="project" value="TreeGrafter"/>
</dbReference>
<dbReference type="GO" id="GO:0044874">
    <property type="term" value="P:lipoprotein localization to outer membrane"/>
    <property type="evidence" value="ECO:0007669"/>
    <property type="project" value="TreeGrafter"/>
</dbReference>
<dbReference type="GO" id="GO:0089705">
    <property type="term" value="P:protein localization to outer membrane"/>
    <property type="evidence" value="ECO:0007669"/>
    <property type="project" value="TreeGrafter"/>
</dbReference>
<dbReference type="CDD" id="cd03255">
    <property type="entry name" value="ABC_MJ0796_LolCDE_FtsE"/>
    <property type="match status" value="1"/>
</dbReference>
<dbReference type="FunFam" id="3.40.50.300:FF:000032">
    <property type="entry name" value="Export ABC transporter ATP-binding protein"/>
    <property type="match status" value="1"/>
</dbReference>
<dbReference type="Gene3D" id="3.40.50.300">
    <property type="entry name" value="P-loop containing nucleotide triphosphate hydrolases"/>
    <property type="match status" value="1"/>
</dbReference>
<dbReference type="InterPro" id="IPR003593">
    <property type="entry name" value="AAA+_ATPase"/>
</dbReference>
<dbReference type="InterPro" id="IPR003439">
    <property type="entry name" value="ABC_transporter-like_ATP-bd"/>
</dbReference>
<dbReference type="InterPro" id="IPR017871">
    <property type="entry name" value="ABC_transporter-like_CS"/>
</dbReference>
<dbReference type="InterPro" id="IPR015854">
    <property type="entry name" value="ABC_transpr_LolD-like"/>
</dbReference>
<dbReference type="InterPro" id="IPR017911">
    <property type="entry name" value="MacB-like_ATP-bd"/>
</dbReference>
<dbReference type="InterPro" id="IPR027417">
    <property type="entry name" value="P-loop_NTPase"/>
</dbReference>
<dbReference type="PANTHER" id="PTHR24220">
    <property type="entry name" value="IMPORT ATP-BINDING PROTEIN"/>
    <property type="match status" value="1"/>
</dbReference>
<dbReference type="PANTHER" id="PTHR24220:SF689">
    <property type="entry name" value="LIPOPROTEIN-RELEASING SYSTEM ATP-BINDING PROTEIN LOLD"/>
    <property type="match status" value="1"/>
</dbReference>
<dbReference type="Pfam" id="PF00005">
    <property type="entry name" value="ABC_tran"/>
    <property type="match status" value="1"/>
</dbReference>
<dbReference type="SMART" id="SM00382">
    <property type="entry name" value="AAA"/>
    <property type="match status" value="1"/>
</dbReference>
<dbReference type="SUPFAM" id="SSF52540">
    <property type="entry name" value="P-loop containing nucleoside triphosphate hydrolases"/>
    <property type="match status" value="1"/>
</dbReference>
<dbReference type="PROSITE" id="PS00211">
    <property type="entry name" value="ABC_TRANSPORTER_1"/>
    <property type="match status" value="1"/>
</dbReference>
<dbReference type="PROSITE" id="PS50893">
    <property type="entry name" value="ABC_TRANSPORTER_2"/>
    <property type="match status" value="1"/>
</dbReference>
<dbReference type="PROSITE" id="PS51244">
    <property type="entry name" value="LOLD"/>
    <property type="match status" value="1"/>
</dbReference>
<comment type="function">
    <text evidence="1">Part of the ABC transporter complex LolCDE involved in the translocation of mature outer membrane-directed lipoproteins, from the inner membrane to the periplasmic chaperone, LolA. Responsible for the formation of the LolA-lipoprotein complex in an ATP-dependent manner.</text>
</comment>
<comment type="subunit">
    <text evidence="1">The complex is composed of two ATP-binding proteins (LolD) and two transmembrane proteins (LolC and LolE).</text>
</comment>
<comment type="subcellular location">
    <subcellularLocation>
        <location evidence="1">Cell inner membrane</location>
        <topology evidence="1">Peripheral membrane protein</topology>
    </subcellularLocation>
</comment>
<comment type="similarity">
    <text evidence="1">Belongs to the ABC transporter superfamily. Lipoprotein translocase (TC 3.A.1.125) family.</text>
</comment>
<proteinExistence type="inferred from homology"/>
<reference key="1">
    <citation type="journal article" date="2006" name="Proc. Natl. Acad. Sci. U.S.A.">
        <title>Evolution of sensory complexity recorded in a myxobacterial genome.</title>
        <authorList>
            <person name="Goldman B.S."/>
            <person name="Nierman W.C."/>
            <person name="Kaiser D."/>
            <person name="Slater S.C."/>
            <person name="Durkin A.S."/>
            <person name="Eisen J.A."/>
            <person name="Ronning C.M."/>
            <person name="Barbazuk W.B."/>
            <person name="Blanchard M."/>
            <person name="Field C."/>
            <person name="Halling C."/>
            <person name="Hinkle G."/>
            <person name="Iartchuk O."/>
            <person name="Kim H.S."/>
            <person name="Mackenzie C."/>
            <person name="Madupu R."/>
            <person name="Miller N."/>
            <person name="Shvartsbeyn A."/>
            <person name="Sullivan S.A."/>
            <person name="Vaudin M."/>
            <person name="Wiegand R."/>
            <person name="Kaplan H.B."/>
        </authorList>
    </citation>
    <scope>NUCLEOTIDE SEQUENCE [LARGE SCALE GENOMIC DNA]</scope>
    <source>
        <strain>DK1622</strain>
    </source>
</reference>
<sequence length="224" mass="24449">MALLSIRNVFKSYFLHGKRIDILRGVSLDIQRGELVSLVGASGAGKSTFLHVLGTLDAPAAGEVMFEDRSVFSMNDAEIAEFRNQTIGFVFQSHFLLPEFTALENVAMPALIRRQDRTAAYAYARELLERVGLGHRVDHRPGELSGGEAQRVALARALVLKPAVLLADEPTGNLDPATGEGIHQLLREVNREQGITAVVVTHNETLARSMPRRLRLAGGEVSEA</sequence>
<evidence type="ECO:0000255" key="1">
    <source>
        <dbReference type="HAMAP-Rule" id="MF_01708"/>
    </source>
</evidence>
<accession>Q1D382</accession>
<name>LOLD_MYXXD</name>